<organism>
    <name type="scientific">Acinetobacter baumannii (strain AYE)</name>
    <dbReference type="NCBI Taxonomy" id="509173"/>
    <lineage>
        <taxon>Bacteria</taxon>
        <taxon>Pseudomonadati</taxon>
        <taxon>Pseudomonadota</taxon>
        <taxon>Gammaproteobacteria</taxon>
        <taxon>Moraxellales</taxon>
        <taxon>Moraxellaceae</taxon>
        <taxon>Acinetobacter</taxon>
        <taxon>Acinetobacter calcoaceticus/baumannii complex</taxon>
    </lineage>
</organism>
<gene>
    <name evidence="2" type="primary">infB</name>
    <name type="ordered locus">ABAYE3438</name>
</gene>
<evidence type="ECO:0000250" key="1"/>
<evidence type="ECO:0000255" key="2">
    <source>
        <dbReference type="HAMAP-Rule" id="MF_00100"/>
    </source>
</evidence>
<evidence type="ECO:0000256" key="3">
    <source>
        <dbReference type="SAM" id="MobiDB-lite"/>
    </source>
</evidence>
<dbReference type="EMBL" id="CU459141">
    <property type="protein sequence ID" value="CAM88231.1"/>
    <property type="molecule type" value="Genomic_DNA"/>
</dbReference>
<dbReference type="RefSeq" id="WP_000130326.1">
    <property type="nucleotide sequence ID" value="NZ_JBDGFB010000003.1"/>
</dbReference>
<dbReference type="SMR" id="B0VE81"/>
<dbReference type="EnsemblBacteria" id="CAM88231">
    <property type="protein sequence ID" value="CAM88231"/>
    <property type="gene ID" value="ABAYE3438"/>
</dbReference>
<dbReference type="GeneID" id="92892331"/>
<dbReference type="KEGG" id="aby:ABAYE3438"/>
<dbReference type="HOGENOM" id="CLU_006301_6_2_6"/>
<dbReference type="GO" id="GO:0005829">
    <property type="term" value="C:cytosol"/>
    <property type="evidence" value="ECO:0007669"/>
    <property type="project" value="TreeGrafter"/>
</dbReference>
<dbReference type="GO" id="GO:0005525">
    <property type="term" value="F:GTP binding"/>
    <property type="evidence" value="ECO:0007669"/>
    <property type="project" value="UniProtKB-KW"/>
</dbReference>
<dbReference type="GO" id="GO:0003924">
    <property type="term" value="F:GTPase activity"/>
    <property type="evidence" value="ECO:0007669"/>
    <property type="project" value="UniProtKB-UniRule"/>
</dbReference>
<dbReference type="GO" id="GO:0003743">
    <property type="term" value="F:translation initiation factor activity"/>
    <property type="evidence" value="ECO:0007669"/>
    <property type="project" value="UniProtKB-UniRule"/>
</dbReference>
<dbReference type="CDD" id="cd01887">
    <property type="entry name" value="IF2_eIF5B"/>
    <property type="match status" value="1"/>
</dbReference>
<dbReference type="CDD" id="cd03702">
    <property type="entry name" value="IF2_mtIF2_II"/>
    <property type="match status" value="1"/>
</dbReference>
<dbReference type="CDD" id="cd03692">
    <property type="entry name" value="mtIF2_IVc"/>
    <property type="match status" value="1"/>
</dbReference>
<dbReference type="FunFam" id="2.40.30.10:FF:000007">
    <property type="entry name" value="Translation initiation factor IF-2"/>
    <property type="match status" value="1"/>
</dbReference>
<dbReference type="FunFam" id="2.40.30.10:FF:000008">
    <property type="entry name" value="Translation initiation factor IF-2"/>
    <property type="match status" value="1"/>
</dbReference>
<dbReference type="FunFam" id="3.40.50.10050:FF:000001">
    <property type="entry name" value="Translation initiation factor IF-2"/>
    <property type="match status" value="1"/>
</dbReference>
<dbReference type="FunFam" id="3.40.50.300:FF:000019">
    <property type="entry name" value="Translation initiation factor IF-2"/>
    <property type="match status" value="1"/>
</dbReference>
<dbReference type="Gene3D" id="3.40.50.300">
    <property type="entry name" value="P-loop containing nucleotide triphosphate hydrolases"/>
    <property type="match status" value="1"/>
</dbReference>
<dbReference type="Gene3D" id="3.30.56.50">
    <property type="entry name" value="Putative DNA-binding domain, N-terminal subdomain of bacterial translation initiation factor IF2"/>
    <property type="match status" value="1"/>
</dbReference>
<dbReference type="Gene3D" id="2.40.30.10">
    <property type="entry name" value="Translation factors"/>
    <property type="match status" value="2"/>
</dbReference>
<dbReference type="Gene3D" id="3.40.50.10050">
    <property type="entry name" value="Translation initiation factor IF- 2, domain 3"/>
    <property type="match status" value="1"/>
</dbReference>
<dbReference type="HAMAP" id="MF_00100_B">
    <property type="entry name" value="IF_2_B"/>
    <property type="match status" value="1"/>
</dbReference>
<dbReference type="InterPro" id="IPR009061">
    <property type="entry name" value="DNA-bd_dom_put_sf"/>
</dbReference>
<dbReference type="InterPro" id="IPR053905">
    <property type="entry name" value="EF-G-like_DII"/>
</dbReference>
<dbReference type="InterPro" id="IPR013575">
    <property type="entry name" value="IF2_assoc_dom_bac"/>
</dbReference>
<dbReference type="InterPro" id="IPR044145">
    <property type="entry name" value="IF2_II"/>
</dbReference>
<dbReference type="InterPro" id="IPR006847">
    <property type="entry name" value="IF2_N"/>
</dbReference>
<dbReference type="InterPro" id="IPR027417">
    <property type="entry name" value="P-loop_NTPase"/>
</dbReference>
<dbReference type="InterPro" id="IPR005225">
    <property type="entry name" value="Small_GTP-bd"/>
</dbReference>
<dbReference type="InterPro" id="IPR000795">
    <property type="entry name" value="T_Tr_GTP-bd_dom"/>
</dbReference>
<dbReference type="InterPro" id="IPR000178">
    <property type="entry name" value="TF_IF2_bacterial-like"/>
</dbReference>
<dbReference type="InterPro" id="IPR015760">
    <property type="entry name" value="TIF_IF2"/>
</dbReference>
<dbReference type="InterPro" id="IPR023115">
    <property type="entry name" value="TIF_IF2_dom3"/>
</dbReference>
<dbReference type="InterPro" id="IPR036925">
    <property type="entry name" value="TIF_IF2_dom3_sf"/>
</dbReference>
<dbReference type="InterPro" id="IPR009000">
    <property type="entry name" value="Transl_B-barrel_sf"/>
</dbReference>
<dbReference type="NCBIfam" id="TIGR00487">
    <property type="entry name" value="IF-2"/>
    <property type="match status" value="1"/>
</dbReference>
<dbReference type="NCBIfam" id="TIGR00231">
    <property type="entry name" value="small_GTP"/>
    <property type="match status" value="1"/>
</dbReference>
<dbReference type="PANTHER" id="PTHR43381:SF5">
    <property type="entry name" value="TR-TYPE G DOMAIN-CONTAINING PROTEIN"/>
    <property type="match status" value="1"/>
</dbReference>
<dbReference type="PANTHER" id="PTHR43381">
    <property type="entry name" value="TRANSLATION INITIATION FACTOR IF-2-RELATED"/>
    <property type="match status" value="1"/>
</dbReference>
<dbReference type="Pfam" id="PF22042">
    <property type="entry name" value="EF-G_D2"/>
    <property type="match status" value="1"/>
</dbReference>
<dbReference type="Pfam" id="PF00009">
    <property type="entry name" value="GTP_EFTU"/>
    <property type="match status" value="1"/>
</dbReference>
<dbReference type="Pfam" id="PF11987">
    <property type="entry name" value="IF-2"/>
    <property type="match status" value="1"/>
</dbReference>
<dbReference type="Pfam" id="PF08364">
    <property type="entry name" value="IF2_assoc"/>
    <property type="match status" value="1"/>
</dbReference>
<dbReference type="Pfam" id="PF04760">
    <property type="entry name" value="IF2_N"/>
    <property type="match status" value="1"/>
</dbReference>
<dbReference type="SUPFAM" id="SSF52156">
    <property type="entry name" value="Initiation factor IF2/eIF5b, domain 3"/>
    <property type="match status" value="1"/>
</dbReference>
<dbReference type="SUPFAM" id="SSF52540">
    <property type="entry name" value="P-loop containing nucleoside triphosphate hydrolases"/>
    <property type="match status" value="1"/>
</dbReference>
<dbReference type="SUPFAM" id="SSF46955">
    <property type="entry name" value="Putative DNA-binding domain"/>
    <property type="match status" value="1"/>
</dbReference>
<dbReference type="SUPFAM" id="SSF50447">
    <property type="entry name" value="Translation proteins"/>
    <property type="match status" value="2"/>
</dbReference>
<dbReference type="PROSITE" id="PS51722">
    <property type="entry name" value="G_TR_2"/>
    <property type="match status" value="1"/>
</dbReference>
<dbReference type="PROSITE" id="PS01176">
    <property type="entry name" value="IF2"/>
    <property type="match status" value="1"/>
</dbReference>
<sequence length="899" mass="97315">MTDKSIKELALSVGRPVEKLLEQAREAGLPQRTADDIITTEQQDTLVNYLKKVHGQESGNTGKIALKRKTTSTAKVASTSGKAKTINVEVRKKQVFAKPNPEQIAAEAKARAEAEAKARAEQQAREAAEQKARLQTEQKAKATLDAMRAAHQQDSAAQSAPKAAVVVKKRGGGTVKPAPKPAETLEQKKAREAQTAQLKATEEAARRKAAEEAQQRTLEQMRKMASKYSNDDATATIRVIDDSPLASGLVGQAYEDSFNQEDREIKRGGATTNPRAGKKGGRRGQEEQSFVNHNKRGLKSSQANKHGFEKPVKKQVYDVEIGSSIVVADLAQKMAIKVREVIKTLMKMGELVNQNQTIDQDTAALVVEEMGHNPVLVSDTQAEDNLLEAAEEARGEQTTRPPVVTIMGHVDHGKTSLLDRIRRSKVAAGEAGGITQHIGAYHVETDKGIITFLDTPGHAAFTSMRARGAKATDIVVLVVAADDGVMPQTAEAIDHARAAGTPIIVAINKMDKESADPDRVLNELTTKEIVPEEWGGDVPVAKVSAHTGQGIDELLDLILIQSELMELKASAEGAAQGVVIEARVDKGRGAVTSILVQNGTLNIGDLVLAGSSYGRVRAMSDENGKPIKSAGPSIPVEILGLPEAPMAGDEVLVVNDEKKAREVADARADREREKRIERQSAMRLENIMASMGKKDVPTVNVVLRTDVRGTLEALNAALHELSTDEVKVRVISSGVGAITESDVILAESSEAVLLGFNVRADTAARQKSDQDGIDIRYYSIIYELIDDVKDAMSGKLAPEHRETILGVAQVREVFRSSKFGAAAGCMVMEGVIHRNKPIRVLRDDVVIFQGELESLRRYKDVVDEVRAGMECGLAVKGYNDIKPLDKIEVYDVQMVKRSL</sequence>
<name>IF2_ACIBY</name>
<feature type="chain" id="PRO_1000093751" description="Translation initiation factor IF-2">
    <location>
        <begin position="1"/>
        <end position="899"/>
    </location>
</feature>
<feature type="domain" description="tr-type G">
    <location>
        <begin position="399"/>
        <end position="568"/>
    </location>
</feature>
<feature type="region of interest" description="Disordered" evidence="3">
    <location>
        <begin position="116"/>
        <end position="135"/>
    </location>
</feature>
<feature type="region of interest" description="Disordered" evidence="3">
    <location>
        <begin position="170"/>
        <end position="189"/>
    </location>
</feature>
<feature type="region of interest" description="Disordered" evidence="3">
    <location>
        <begin position="262"/>
        <end position="306"/>
    </location>
</feature>
<feature type="region of interest" description="G1" evidence="1">
    <location>
        <begin position="408"/>
        <end position="415"/>
    </location>
</feature>
<feature type="region of interest" description="G2" evidence="1">
    <location>
        <begin position="433"/>
        <end position="437"/>
    </location>
</feature>
<feature type="region of interest" description="G3" evidence="1">
    <location>
        <begin position="454"/>
        <end position="457"/>
    </location>
</feature>
<feature type="region of interest" description="G4" evidence="1">
    <location>
        <begin position="508"/>
        <end position="511"/>
    </location>
</feature>
<feature type="region of interest" description="G5" evidence="1">
    <location>
        <begin position="544"/>
        <end position="546"/>
    </location>
</feature>
<feature type="binding site" evidence="2">
    <location>
        <begin position="408"/>
        <end position="415"/>
    </location>
    <ligand>
        <name>GTP</name>
        <dbReference type="ChEBI" id="CHEBI:37565"/>
    </ligand>
</feature>
<feature type="binding site" evidence="2">
    <location>
        <begin position="454"/>
        <end position="458"/>
    </location>
    <ligand>
        <name>GTP</name>
        <dbReference type="ChEBI" id="CHEBI:37565"/>
    </ligand>
</feature>
<feature type="binding site" evidence="2">
    <location>
        <begin position="508"/>
        <end position="511"/>
    </location>
    <ligand>
        <name>GTP</name>
        <dbReference type="ChEBI" id="CHEBI:37565"/>
    </ligand>
</feature>
<comment type="function">
    <text evidence="2">One of the essential components for the initiation of protein synthesis. Protects formylmethionyl-tRNA from spontaneous hydrolysis and promotes its binding to the 30S ribosomal subunits. Also involved in the hydrolysis of GTP during the formation of the 70S ribosomal complex.</text>
</comment>
<comment type="subcellular location">
    <subcellularLocation>
        <location evidence="2">Cytoplasm</location>
    </subcellularLocation>
</comment>
<comment type="similarity">
    <text evidence="2">Belongs to the TRAFAC class translation factor GTPase superfamily. Classic translation factor GTPase family. IF-2 subfamily.</text>
</comment>
<proteinExistence type="inferred from homology"/>
<protein>
    <recommendedName>
        <fullName evidence="2">Translation initiation factor IF-2</fullName>
    </recommendedName>
</protein>
<keyword id="KW-0963">Cytoplasm</keyword>
<keyword id="KW-0342">GTP-binding</keyword>
<keyword id="KW-0396">Initiation factor</keyword>
<keyword id="KW-0547">Nucleotide-binding</keyword>
<keyword id="KW-0648">Protein biosynthesis</keyword>
<accession>B0VE81</accession>
<reference key="1">
    <citation type="journal article" date="2008" name="PLoS ONE">
        <title>Comparative analysis of Acinetobacters: three genomes for three lifestyles.</title>
        <authorList>
            <person name="Vallenet D."/>
            <person name="Nordmann P."/>
            <person name="Barbe V."/>
            <person name="Poirel L."/>
            <person name="Mangenot S."/>
            <person name="Bataille E."/>
            <person name="Dossat C."/>
            <person name="Gas S."/>
            <person name="Kreimeyer A."/>
            <person name="Lenoble P."/>
            <person name="Oztas S."/>
            <person name="Poulain J."/>
            <person name="Segurens B."/>
            <person name="Robert C."/>
            <person name="Abergel C."/>
            <person name="Claverie J.-M."/>
            <person name="Raoult D."/>
            <person name="Medigue C."/>
            <person name="Weissenbach J."/>
            <person name="Cruveiller S."/>
        </authorList>
    </citation>
    <scope>NUCLEOTIDE SEQUENCE [LARGE SCALE GENOMIC DNA]</scope>
    <source>
        <strain>AYE</strain>
    </source>
</reference>